<dbReference type="EC" id="2.3.2.27" evidence="3"/>
<dbReference type="EMBL" id="AK147367">
    <property type="status" value="NOT_ANNOTATED_CDS"/>
    <property type="molecule type" value="mRNA"/>
</dbReference>
<dbReference type="EMBL" id="AK161486">
    <property type="protein sequence ID" value="BAE36418.1"/>
    <property type="molecule type" value="mRNA"/>
</dbReference>
<dbReference type="EMBL" id="AC117780">
    <property type="status" value="NOT_ANNOTATED_CDS"/>
    <property type="molecule type" value="Genomic_DNA"/>
</dbReference>
<dbReference type="EMBL" id="AC154251">
    <property type="status" value="NOT_ANNOTATED_CDS"/>
    <property type="molecule type" value="Genomic_DNA"/>
</dbReference>
<dbReference type="EMBL" id="AC154478">
    <property type="status" value="NOT_ANNOTATED_CDS"/>
    <property type="molecule type" value="Genomic_DNA"/>
</dbReference>
<dbReference type="RefSeq" id="NP_001028410.1">
    <property type="nucleotide sequence ID" value="NM_001033238.1"/>
</dbReference>
<dbReference type="RefSeq" id="XP_006522010.1">
    <molecule id="Q3TTA7-1"/>
    <property type="nucleotide sequence ID" value="XM_006521947.1"/>
</dbReference>
<dbReference type="RefSeq" id="XP_006522011.1">
    <molecule id="Q3TTA7-1"/>
    <property type="nucleotide sequence ID" value="XM_006521948.1"/>
</dbReference>
<dbReference type="RefSeq" id="XP_006522012.1">
    <molecule id="Q3TTA7-1"/>
    <property type="nucleotide sequence ID" value="XM_006521949.1"/>
</dbReference>
<dbReference type="RefSeq" id="XP_006522013.1">
    <molecule id="Q3TTA7-1"/>
    <property type="nucleotide sequence ID" value="XM_006521950.4"/>
</dbReference>
<dbReference type="RefSeq" id="XP_006522015.1">
    <molecule id="Q3TTA7-2"/>
    <property type="nucleotide sequence ID" value="XM_006521952.5"/>
</dbReference>
<dbReference type="PDB" id="5AXI">
    <property type="method" value="X-ray"/>
    <property type="resolution" value="2.50 A"/>
    <property type="chains" value="A/B/C=38-343"/>
</dbReference>
<dbReference type="PDBsum" id="5AXI"/>
<dbReference type="BMRB" id="Q3TTA7"/>
<dbReference type="SMR" id="Q3TTA7"/>
<dbReference type="BioGRID" id="229001">
    <property type="interactions" value="33"/>
</dbReference>
<dbReference type="CORUM" id="Q3TTA7"/>
<dbReference type="FunCoup" id="Q3TTA7">
    <property type="interactions" value="3368"/>
</dbReference>
<dbReference type="IntAct" id="Q3TTA7">
    <property type="interactions" value="48"/>
</dbReference>
<dbReference type="MINT" id="Q3TTA7"/>
<dbReference type="STRING" id="10090.ENSMUSP00000110115"/>
<dbReference type="GlyGen" id="Q3TTA7">
    <property type="glycosylation" value="1 site, 1 N-linked glycan (1 site)"/>
</dbReference>
<dbReference type="iPTMnet" id="Q3TTA7"/>
<dbReference type="PhosphoSitePlus" id="Q3TTA7"/>
<dbReference type="jPOST" id="Q3TTA7"/>
<dbReference type="PaxDb" id="10090-ENSMUSP00000110115"/>
<dbReference type="PeptideAtlas" id="Q3TTA7"/>
<dbReference type="ProteomicsDB" id="265341">
    <molecule id="Q3TTA7-1"/>
</dbReference>
<dbReference type="ProteomicsDB" id="265342">
    <molecule id="Q3TTA7-2"/>
</dbReference>
<dbReference type="Antibodypedia" id="16015">
    <property type="antibodies" value="267 antibodies from 33 providers"/>
</dbReference>
<dbReference type="Ensembl" id="ENSMUST00000226593.2">
    <molecule id="Q3TTA7-1"/>
    <property type="protein sequence ID" value="ENSMUSP00000154755.2"/>
    <property type="gene ID" value="ENSMUSG00000022637.12"/>
</dbReference>
<dbReference type="Ensembl" id="ENSMUST00000227756.2">
    <molecule id="Q3TTA7-2"/>
    <property type="protein sequence ID" value="ENSMUSP00000153753.2"/>
    <property type="gene ID" value="ENSMUSG00000022637.12"/>
</dbReference>
<dbReference type="Ensembl" id="ENSMUST00000227879.2">
    <molecule id="Q3TTA7-1"/>
    <property type="protein sequence ID" value="ENSMUSP00000153787.2"/>
    <property type="gene ID" value="ENSMUSG00000022637.12"/>
</dbReference>
<dbReference type="GeneID" id="208650"/>
<dbReference type="KEGG" id="mmu:208650"/>
<dbReference type="UCSC" id="uc007zlf.1">
    <molecule id="Q3TTA7-1"/>
    <property type="organism name" value="mouse"/>
</dbReference>
<dbReference type="AGR" id="MGI:2146430"/>
<dbReference type="CTD" id="868"/>
<dbReference type="MGI" id="MGI:2146430">
    <property type="gene designation" value="Cblb"/>
</dbReference>
<dbReference type="VEuPathDB" id="HostDB:ENSMUSG00000022637"/>
<dbReference type="eggNOG" id="KOG1785">
    <property type="taxonomic scope" value="Eukaryota"/>
</dbReference>
<dbReference type="GeneTree" id="ENSGT00940000156631"/>
<dbReference type="InParanoid" id="Q3TTA7"/>
<dbReference type="OMA" id="FACFPPP"/>
<dbReference type="OrthoDB" id="7237699at2759"/>
<dbReference type="Reactome" id="R-MMU-983168">
    <property type="pathway name" value="Antigen processing: Ubiquitination &amp; Proteasome degradation"/>
</dbReference>
<dbReference type="UniPathway" id="UPA00143"/>
<dbReference type="BioGRID-ORCS" id="208650">
    <property type="hits" value="0 hits in 79 CRISPR screens"/>
</dbReference>
<dbReference type="ChiTaRS" id="Cblb">
    <property type="organism name" value="mouse"/>
</dbReference>
<dbReference type="PRO" id="PR:Q3TTA7"/>
<dbReference type="Proteomes" id="UP000000589">
    <property type="component" value="Chromosome 16"/>
</dbReference>
<dbReference type="RNAct" id="Q3TTA7">
    <property type="molecule type" value="protein"/>
</dbReference>
<dbReference type="Bgee" id="ENSMUSG00000022637">
    <property type="expression patterns" value="Expressed in manus and 243 other cell types or tissues"/>
</dbReference>
<dbReference type="ExpressionAtlas" id="Q3TTA7">
    <property type="expression patterns" value="baseline and differential"/>
</dbReference>
<dbReference type="GO" id="GO:0005829">
    <property type="term" value="C:cytosol"/>
    <property type="evidence" value="ECO:0007669"/>
    <property type="project" value="Ensembl"/>
</dbReference>
<dbReference type="GO" id="GO:0098978">
    <property type="term" value="C:glutamatergic synapse"/>
    <property type="evidence" value="ECO:0000314"/>
    <property type="project" value="SynGO"/>
</dbReference>
<dbReference type="GO" id="GO:0005654">
    <property type="term" value="C:nucleoplasm"/>
    <property type="evidence" value="ECO:0007669"/>
    <property type="project" value="Ensembl"/>
</dbReference>
<dbReference type="GO" id="GO:0098794">
    <property type="term" value="C:postsynapse"/>
    <property type="evidence" value="ECO:0000314"/>
    <property type="project" value="SynGO"/>
</dbReference>
<dbReference type="GO" id="GO:0005509">
    <property type="term" value="F:calcium ion binding"/>
    <property type="evidence" value="ECO:0007669"/>
    <property type="project" value="InterPro"/>
</dbReference>
<dbReference type="GO" id="GO:0001784">
    <property type="term" value="F:phosphotyrosine residue binding"/>
    <property type="evidence" value="ECO:0007669"/>
    <property type="project" value="InterPro"/>
</dbReference>
<dbReference type="GO" id="GO:0004842">
    <property type="term" value="F:ubiquitin-protein transferase activity"/>
    <property type="evidence" value="ECO:0007669"/>
    <property type="project" value="InterPro"/>
</dbReference>
<dbReference type="GO" id="GO:0008270">
    <property type="term" value="F:zinc ion binding"/>
    <property type="evidence" value="ECO:0007669"/>
    <property type="project" value="UniProtKB-KW"/>
</dbReference>
<dbReference type="GO" id="GO:0035739">
    <property type="term" value="P:CD4-positive, alpha-beta T cell proliferation"/>
    <property type="evidence" value="ECO:0000315"/>
    <property type="project" value="MGI"/>
</dbReference>
<dbReference type="GO" id="GO:0006955">
    <property type="term" value="P:immune response"/>
    <property type="evidence" value="ECO:0000315"/>
    <property type="project" value="MGI"/>
</dbReference>
<dbReference type="GO" id="GO:0035556">
    <property type="term" value="P:intracellular signal transduction"/>
    <property type="evidence" value="ECO:0000315"/>
    <property type="project" value="MGI"/>
</dbReference>
<dbReference type="GO" id="GO:2000562">
    <property type="term" value="P:negative regulation of CD4-positive, alpha-beta T cell proliferation"/>
    <property type="evidence" value="ECO:0000315"/>
    <property type="project" value="MGI"/>
</dbReference>
<dbReference type="GO" id="GO:0050860">
    <property type="term" value="P:negative regulation of T cell receptor signaling pathway"/>
    <property type="evidence" value="ECO:0000315"/>
    <property type="project" value="MGI"/>
</dbReference>
<dbReference type="GO" id="GO:0045732">
    <property type="term" value="P:positive regulation of protein catabolic process"/>
    <property type="evidence" value="ECO:0000315"/>
    <property type="project" value="MGI"/>
</dbReference>
<dbReference type="GO" id="GO:0031398">
    <property type="term" value="P:positive regulation of protein ubiquitination"/>
    <property type="evidence" value="ECO:0000314"/>
    <property type="project" value="MGI"/>
</dbReference>
<dbReference type="GO" id="GO:0002669">
    <property type="term" value="P:positive regulation of T cell anergy"/>
    <property type="evidence" value="ECO:0000315"/>
    <property type="project" value="MGI"/>
</dbReference>
<dbReference type="GO" id="GO:0030163">
    <property type="term" value="P:protein catabolic process"/>
    <property type="evidence" value="ECO:0000315"/>
    <property type="project" value="MGI"/>
</dbReference>
<dbReference type="GO" id="GO:0016567">
    <property type="term" value="P:protein ubiquitination"/>
    <property type="evidence" value="ECO:0007669"/>
    <property type="project" value="UniProtKB-UniPathway"/>
</dbReference>
<dbReference type="GO" id="GO:0030155">
    <property type="term" value="P:regulation of cell adhesion"/>
    <property type="evidence" value="ECO:0000315"/>
    <property type="project" value="MGI"/>
</dbReference>
<dbReference type="GO" id="GO:2000583">
    <property type="term" value="P:regulation of platelet-derived growth factor receptor-alpha signaling pathway"/>
    <property type="evidence" value="ECO:0000315"/>
    <property type="project" value="UniProtKB"/>
</dbReference>
<dbReference type="GO" id="GO:0099149">
    <property type="term" value="P:regulation of postsynaptic neurotransmitter receptor internalization"/>
    <property type="evidence" value="ECO:0000314"/>
    <property type="project" value="SynGO"/>
</dbReference>
<dbReference type="GO" id="GO:0050856">
    <property type="term" value="P:regulation of T cell receptor signaling pathway"/>
    <property type="evidence" value="ECO:0000266"/>
    <property type="project" value="MGI"/>
</dbReference>
<dbReference type="GO" id="GO:0140252">
    <property type="term" value="P:regulation protein catabolic process at postsynapse"/>
    <property type="evidence" value="ECO:0000314"/>
    <property type="project" value="SynGO"/>
</dbReference>
<dbReference type="GO" id="GO:0042110">
    <property type="term" value="P:T cell activation"/>
    <property type="evidence" value="ECO:0000315"/>
    <property type="project" value="MGI"/>
</dbReference>
<dbReference type="GO" id="GO:0002870">
    <property type="term" value="P:T cell anergy"/>
    <property type="evidence" value="ECO:0000315"/>
    <property type="project" value="MGI"/>
</dbReference>
<dbReference type="GO" id="GO:0050852">
    <property type="term" value="P:T cell receptor signaling pathway"/>
    <property type="evidence" value="ECO:0000315"/>
    <property type="project" value="MGI"/>
</dbReference>
<dbReference type="CDD" id="cd16709">
    <property type="entry name" value="RING-HC_Cbl-b"/>
    <property type="match status" value="1"/>
</dbReference>
<dbReference type="CDD" id="cd09920">
    <property type="entry name" value="SH2_Cbl-b_TKB"/>
    <property type="match status" value="1"/>
</dbReference>
<dbReference type="CDD" id="cd14392">
    <property type="entry name" value="UBA_Cbl-b"/>
    <property type="match status" value="1"/>
</dbReference>
<dbReference type="FunFam" id="1.10.238.10:FF:000022">
    <property type="entry name" value="E3 ubiquitin-protein ligase CBL"/>
    <property type="match status" value="1"/>
</dbReference>
<dbReference type="FunFam" id="1.20.930.20:FF:000001">
    <property type="entry name" value="E3 ubiquitin-protein ligase CBL"/>
    <property type="match status" value="1"/>
</dbReference>
<dbReference type="FunFam" id="3.30.40.10:FF:000015">
    <property type="entry name" value="E3 ubiquitin-protein ligase CBL"/>
    <property type="match status" value="1"/>
</dbReference>
<dbReference type="FunFam" id="3.30.505.10:FF:000154">
    <property type="entry name" value="E3 ubiquitin-protein ligase CBL"/>
    <property type="match status" value="1"/>
</dbReference>
<dbReference type="FunFam" id="1.10.8.10:FF:000037">
    <property type="entry name" value="E3 ubiquitin-protein ligase CBL-B isoform B"/>
    <property type="match status" value="1"/>
</dbReference>
<dbReference type="Gene3D" id="1.20.930.20">
    <property type="entry name" value="Adaptor protein Cbl, N-terminal domain"/>
    <property type="match status" value="1"/>
</dbReference>
<dbReference type="Gene3D" id="1.10.8.10">
    <property type="entry name" value="DNA helicase RuvA subunit, C-terminal domain"/>
    <property type="match status" value="1"/>
</dbReference>
<dbReference type="Gene3D" id="1.10.238.10">
    <property type="entry name" value="EF-hand"/>
    <property type="match status" value="1"/>
</dbReference>
<dbReference type="Gene3D" id="3.30.505.10">
    <property type="entry name" value="SH2 domain"/>
    <property type="match status" value="1"/>
</dbReference>
<dbReference type="Gene3D" id="3.30.40.10">
    <property type="entry name" value="Zinc/RING finger domain, C3HC4 (zinc finger)"/>
    <property type="match status" value="1"/>
</dbReference>
<dbReference type="InterPro" id="IPR024162">
    <property type="entry name" value="Adaptor_Cbl"/>
</dbReference>
<dbReference type="InterPro" id="IPR014741">
    <property type="entry name" value="Adaptor_Cbl_EF_hand-like"/>
</dbReference>
<dbReference type="InterPro" id="IPR036537">
    <property type="entry name" value="Adaptor_Cbl_N_dom_sf"/>
</dbReference>
<dbReference type="InterPro" id="IPR003153">
    <property type="entry name" value="Adaptor_Cbl_N_hlx"/>
</dbReference>
<dbReference type="InterPro" id="IPR014742">
    <property type="entry name" value="Adaptor_Cbl_SH2-like"/>
</dbReference>
<dbReference type="InterPro" id="IPR039520">
    <property type="entry name" value="CBL-B_RING-HC"/>
</dbReference>
<dbReference type="InterPro" id="IPR024159">
    <property type="entry name" value="Cbl_PTB"/>
</dbReference>
<dbReference type="InterPro" id="IPR011992">
    <property type="entry name" value="EF-hand-dom_pair"/>
</dbReference>
<dbReference type="InterPro" id="IPR036860">
    <property type="entry name" value="SH2_dom_sf"/>
</dbReference>
<dbReference type="InterPro" id="IPR015940">
    <property type="entry name" value="UBA"/>
</dbReference>
<dbReference type="InterPro" id="IPR018957">
    <property type="entry name" value="Znf_C3HC4_RING-type"/>
</dbReference>
<dbReference type="InterPro" id="IPR001841">
    <property type="entry name" value="Znf_RING"/>
</dbReference>
<dbReference type="InterPro" id="IPR013083">
    <property type="entry name" value="Znf_RING/FYVE/PHD"/>
</dbReference>
<dbReference type="InterPro" id="IPR017907">
    <property type="entry name" value="Znf_RING_CS"/>
</dbReference>
<dbReference type="PANTHER" id="PTHR23007">
    <property type="entry name" value="CBL"/>
    <property type="match status" value="1"/>
</dbReference>
<dbReference type="PANTHER" id="PTHR23007:SF3">
    <property type="entry name" value="E3 UBIQUITIN-PROTEIN LIGASE CBL-B"/>
    <property type="match status" value="1"/>
</dbReference>
<dbReference type="Pfam" id="PF02262">
    <property type="entry name" value="Cbl_N"/>
    <property type="match status" value="1"/>
</dbReference>
<dbReference type="Pfam" id="PF02761">
    <property type="entry name" value="Cbl_N2"/>
    <property type="match status" value="1"/>
</dbReference>
<dbReference type="Pfam" id="PF02762">
    <property type="entry name" value="Cbl_N3"/>
    <property type="match status" value="1"/>
</dbReference>
<dbReference type="Pfam" id="PF00097">
    <property type="entry name" value="zf-C3HC4"/>
    <property type="match status" value="1"/>
</dbReference>
<dbReference type="SMART" id="SM00184">
    <property type="entry name" value="RING"/>
    <property type="match status" value="1"/>
</dbReference>
<dbReference type="SMART" id="SM00165">
    <property type="entry name" value="UBA"/>
    <property type="match status" value="1"/>
</dbReference>
<dbReference type="SUPFAM" id="SSF47473">
    <property type="entry name" value="EF-hand"/>
    <property type="match status" value="1"/>
</dbReference>
<dbReference type="SUPFAM" id="SSF47668">
    <property type="entry name" value="N-terminal domain of cbl (N-cbl)"/>
    <property type="match status" value="1"/>
</dbReference>
<dbReference type="SUPFAM" id="SSF57850">
    <property type="entry name" value="RING/U-box"/>
    <property type="match status" value="1"/>
</dbReference>
<dbReference type="SUPFAM" id="SSF55550">
    <property type="entry name" value="SH2 domain"/>
    <property type="match status" value="1"/>
</dbReference>
<dbReference type="PROSITE" id="PS51506">
    <property type="entry name" value="CBL_PTB"/>
    <property type="match status" value="1"/>
</dbReference>
<dbReference type="PROSITE" id="PS50030">
    <property type="entry name" value="UBA"/>
    <property type="match status" value="1"/>
</dbReference>
<dbReference type="PROSITE" id="PS00518">
    <property type="entry name" value="ZF_RING_1"/>
    <property type="match status" value="1"/>
</dbReference>
<dbReference type="PROSITE" id="PS50089">
    <property type="entry name" value="ZF_RING_2"/>
    <property type="match status" value="1"/>
</dbReference>
<proteinExistence type="evidence at protein level"/>
<feature type="chain" id="PRO_0000055861" description="E3 ubiquitin-protein ligase CBL-B">
    <location>
        <begin position="1"/>
        <end position="982"/>
    </location>
</feature>
<feature type="domain" description="Cbl-PTB" evidence="7">
    <location>
        <begin position="35"/>
        <end position="343"/>
    </location>
</feature>
<feature type="domain" description="UBA" evidence="6">
    <location>
        <begin position="931"/>
        <end position="970"/>
    </location>
</feature>
<feature type="zinc finger region" description="RING-type" evidence="5">
    <location>
        <begin position="373"/>
        <end position="412"/>
    </location>
</feature>
<feature type="region of interest" description="4H">
    <location>
        <begin position="35"/>
        <end position="167"/>
    </location>
</feature>
<feature type="region of interest" description="EF-hand-like">
    <location>
        <begin position="168"/>
        <end position="240"/>
    </location>
</feature>
<feature type="region of interest" description="SH2-like">
    <location>
        <begin position="241"/>
        <end position="343"/>
    </location>
</feature>
<feature type="region of interest" description="Linker">
    <location>
        <begin position="344"/>
        <end position="372"/>
    </location>
</feature>
<feature type="region of interest" description="Disordered" evidence="8">
    <location>
        <begin position="465"/>
        <end position="588"/>
    </location>
</feature>
<feature type="region of interest" description="Interaction with VAV1" evidence="1">
    <location>
        <begin position="543"/>
        <end position="567"/>
    </location>
</feature>
<feature type="region of interest" description="Disordered" evidence="8">
    <location>
        <begin position="702"/>
        <end position="723"/>
    </location>
</feature>
<feature type="region of interest" description="Disordered" evidence="8">
    <location>
        <begin position="745"/>
        <end position="929"/>
    </location>
</feature>
<feature type="region of interest" description="Interaction with SH3KBP1" evidence="1">
    <location>
        <begin position="891"/>
        <end position="927"/>
    </location>
</feature>
<feature type="compositionally biased region" description="Polar residues" evidence="8">
    <location>
        <begin position="473"/>
        <end position="486"/>
    </location>
</feature>
<feature type="compositionally biased region" description="Pro residues" evidence="8">
    <location>
        <begin position="544"/>
        <end position="566"/>
    </location>
</feature>
<feature type="compositionally biased region" description="Polar residues" evidence="8">
    <location>
        <begin position="714"/>
        <end position="723"/>
    </location>
</feature>
<feature type="compositionally biased region" description="Pro residues" evidence="8">
    <location>
        <begin position="819"/>
        <end position="828"/>
    </location>
</feature>
<feature type="compositionally biased region" description="Low complexity" evidence="8">
    <location>
        <begin position="838"/>
        <end position="848"/>
    </location>
</feature>
<feature type="compositionally biased region" description="Polar residues" evidence="8">
    <location>
        <begin position="884"/>
        <end position="899"/>
    </location>
</feature>
<feature type="compositionally biased region" description="Basic residues" evidence="8">
    <location>
        <begin position="906"/>
        <end position="922"/>
    </location>
</feature>
<feature type="binding site" evidence="2">
    <location>
        <position position="221"/>
    </location>
    <ligand>
        <name>Ca(2+)</name>
        <dbReference type="ChEBI" id="CHEBI:29108"/>
    </ligand>
</feature>
<feature type="binding site" evidence="2">
    <location>
        <position position="223"/>
    </location>
    <ligand>
        <name>Ca(2+)</name>
        <dbReference type="ChEBI" id="CHEBI:29108"/>
    </ligand>
</feature>
<feature type="binding site" evidence="2">
    <location>
        <position position="225"/>
    </location>
    <ligand>
        <name>Ca(2+)</name>
        <dbReference type="ChEBI" id="CHEBI:29108"/>
    </ligand>
</feature>
<feature type="binding site" evidence="2">
    <location>
        <position position="227"/>
    </location>
    <ligand>
        <name>Ca(2+)</name>
        <dbReference type="ChEBI" id="CHEBI:29108"/>
    </ligand>
</feature>
<feature type="binding site" evidence="2">
    <location>
        <position position="232"/>
    </location>
    <ligand>
        <name>Ca(2+)</name>
        <dbReference type="ChEBI" id="CHEBI:29108"/>
    </ligand>
</feature>
<feature type="binding site" evidence="1">
    <location>
        <position position="286"/>
    </location>
    <ligand>
        <name>4-O-phospho-L-tyrosine</name>
        <dbReference type="ChEBI" id="CHEBI:62338"/>
    </ligand>
</feature>
<feature type="modified residue" description="Phosphoserine; by PKC/PRKCQ" evidence="3">
    <location>
        <position position="282"/>
    </location>
</feature>
<feature type="modified residue" description="Phosphotyrosine" evidence="3">
    <location>
        <position position="363"/>
    </location>
</feature>
<feature type="modified residue" description="Phosphoserine" evidence="4">
    <location>
        <position position="476"/>
    </location>
</feature>
<feature type="modified residue" description="Phosphoserine" evidence="22">
    <location>
        <position position="480"/>
    </location>
</feature>
<feature type="modified residue" description="Phosphoserine" evidence="22">
    <location>
        <position position="484"/>
    </location>
</feature>
<feature type="modified residue" description="Phosphoserine" evidence="22">
    <location>
        <position position="521"/>
    </location>
</feature>
<feature type="modified residue" description="Phosphoserine" evidence="3">
    <location>
        <position position="525"/>
    </location>
</feature>
<feature type="modified residue" description="Phosphoserine" evidence="3">
    <location>
        <position position="529"/>
    </location>
</feature>
<feature type="modified residue" description="Phosphoserine" evidence="4">
    <location>
        <position position="633"/>
    </location>
</feature>
<feature type="modified residue" description="Phosphotyrosine" evidence="15">
    <location>
        <position position="664"/>
    </location>
</feature>
<feature type="modified residue" description="Phosphotyrosine" evidence="15">
    <location>
        <position position="708"/>
    </location>
</feature>
<feature type="modified residue" description="Phosphotyrosine" evidence="21">
    <location>
        <position position="889"/>
    </location>
</feature>
<feature type="splice variant" id="VSP_017222" description="In isoform 2." evidence="19">
    <location>
        <begin position="1"/>
        <end position="152"/>
    </location>
</feature>
<feature type="mutagenesis site" description="Homozygous mice display immune dysregulation with T and B cell hyperproliferation in response to antigen receptor cross-linking." evidence="18">
    <original>H</original>
    <variation>L</variation>
    <location>
        <position position="257"/>
    </location>
</feature>
<feature type="sequence conflict" description="In Ref. 1; BAE36418." evidence="20" ref="1">
    <original>A</original>
    <variation>T</variation>
    <location>
        <position position="176"/>
    </location>
</feature>
<feature type="helix" evidence="23">
    <location>
        <begin position="43"/>
        <end position="60"/>
    </location>
</feature>
<feature type="helix" evidence="23">
    <location>
        <begin position="63"/>
        <end position="65"/>
    </location>
</feature>
<feature type="strand" evidence="23">
    <location>
        <begin position="69"/>
        <end position="72"/>
    </location>
</feature>
<feature type="helix" evidence="23">
    <location>
        <begin position="74"/>
        <end position="94"/>
    </location>
</feature>
<feature type="helix" evidence="23">
    <location>
        <begin position="98"/>
        <end position="103"/>
    </location>
</feature>
<feature type="helix" evidence="23">
    <location>
        <begin position="105"/>
        <end position="128"/>
    </location>
</feature>
<feature type="helix" evidence="23">
    <location>
        <begin position="129"/>
        <end position="133"/>
    </location>
</feature>
<feature type="helix" evidence="23">
    <location>
        <begin position="138"/>
        <end position="160"/>
    </location>
</feature>
<feature type="helix" evidence="23">
    <location>
        <begin position="162"/>
        <end position="164"/>
    </location>
</feature>
<feature type="helix" evidence="23">
    <location>
        <begin position="168"/>
        <end position="170"/>
    </location>
</feature>
<feature type="helix" evidence="23">
    <location>
        <begin position="176"/>
        <end position="186"/>
    </location>
</feature>
<feature type="strand" evidence="23">
    <location>
        <begin position="190"/>
        <end position="193"/>
    </location>
</feature>
<feature type="helix" evidence="23">
    <location>
        <begin position="194"/>
        <end position="204"/>
    </location>
</feature>
<feature type="helix" evidence="23">
    <location>
        <begin position="210"/>
        <end position="220"/>
    </location>
</feature>
<feature type="strand" evidence="23">
    <location>
        <begin position="225"/>
        <end position="229"/>
    </location>
</feature>
<feature type="helix" evidence="23">
    <location>
        <begin position="230"/>
        <end position="240"/>
    </location>
</feature>
<feature type="helix" evidence="23">
    <location>
        <begin position="243"/>
        <end position="245"/>
    </location>
</feature>
<feature type="helix" evidence="23">
    <location>
        <begin position="246"/>
        <end position="254"/>
    </location>
</feature>
<feature type="strand" evidence="23">
    <location>
        <begin position="260"/>
        <end position="263"/>
    </location>
</feature>
<feature type="helix" evidence="23">
    <location>
        <begin position="266"/>
        <end position="273"/>
    </location>
</feature>
<feature type="helix" evidence="23">
    <location>
        <begin position="274"/>
        <end position="276"/>
    </location>
</feature>
<feature type="strand" evidence="23">
    <location>
        <begin position="282"/>
        <end position="287"/>
    </location>
</feature>
<feature type="strand" evidence="23">
    <location>
        <begin position="289"/>
        <end position="291"/>
    </location>
</feature>
<feature type="strand" evidence="23">
    <location>
        <begin position="295"/>
        <end position="300"/>
    </location>
</feature>
<feature type="strand" evidence="23">
    <location>
        <begin position="306"/>
        <end position="309"/>
    </location>
</feature>
<feature type="strand" evidence="23">
    <location>
        <begin position="312"/>
        <end position="314"/>
    </location>
</feature>
<feature type="helix" evidence="23">
    <location>
        <begin position="316"/>
        <end position="325"/>
    </location>
</feature>
<organism>
    <name type="scientific">Mus musculus</name>
    <name type="common">Mouse</name>
    <dbReference type="NCBI Taxonomy" id="10090"/>
    <lineage>
        <taxon>Eukaryota</taxon>
        <taxon>Metazoa</taxon>
        <taxon>Chordata</taxon>
        <taxon>Craniata</taxon>
        <taxon>Vertebrata</taxon>
        <taxon>Euteleostomi</taxon>
        <taxon>Mammalia</taxon>
        <taxon>Eutheria</taxon>
        <taxon>Euarchontoglires</taxon>
        <taxon>Glires</taxon>
        <taxon>Rodentia</taxon>
        <taxon>Myomorpha</taxon>
        <taxon>Muroidea</taxon>
        <taxon>Muridae</taxon>
        <taxon>Murinae</taxon>
        <taxon>Mus</taxon>
        <taxon>Mus</taxon>
    </lineage>
</organism>
<name>CBLB_MOUSE</name>
<gene>
    <name type="primary">Cblb</name>
</gene>
<evidence type="ECO:0000250" key="1"/>
<evidence type="ECO:0000250" key="2">
    <source>
        <dbReference type="UniProtKB" id="P22681"/>
    </source>
</evidence>
<evidence type="ECO:0000250" key="3">
    <source>
        <dbReference type="UniProtKB" id="Q13191"/>
    </source>
</evidence>
<evidence type="ECO:0000250" key="4">
    <source>
        <dbReference type="UniProtKB" id="Q8K4S7"/>
    </source>
</evidence>
<evidence type="ECO:0000255" key="5">
    <source>
        <dbReference type="PROSITE-ProRule" id="PRU00175"/>
    </source>
</evidence>
<evidence type="ECO:0000255" key="6">
    <source>
        <dbReference type="PROSITE-ProRule" id="PRU00212"/>
    </source>
</evidence>
<evidence type="ECO:0000255" key="7">
    <source>
        <dbReference type="PROSITE-ProRule" id="PRU00839"/>
    </source>
</evidence>
<evidence type="ECO:0000256" key="8">
    <source>
        <dbReference type="SAM" id="MobiDB-lite"/>
    </source>
</evidence>
<evidence type="ECO:0000269" key="9">
    <source>
    </source>
</evidence>
<evidence type="ECO:0000269" key="10">
    <source>
    </source>
</evidence>
<evidence type="ECO:0000269" key="11">
    <source>
    </source>
</evidence>
<evidence type="ECO:0000269" key="12">
    <source>
    </source>
</evidence>
<evidence type="ECO:0000269" key="13">
    <source>
    </source>
</evidence>
<evidence type="ECO:0000269" key="14">
    <source>
    </source>
</evidence>
<evidence type="ECO:0000269" key="15">
    <source>
    </source>
</evidence>
<evidence type="ECO:0000269" key="16">
    <source>
    </source>
</evidence>
<evidence type="ECO:0000269" key="17">
    <source>
    </source>
</evidence>
<evidence type="ECO:0000269" key="18">
    <source>
    </source>
</evidence>
<evidence type="ECO:0000303" key="19">
    <source>
    </source>
</evidence>
<evidence type="ECO:0000305" key="20"/>
<evidence type="ECO:0007744" key="21">
    <source>
    </source>
</evidence>
<evidence type="ECO:0007744" key="22">
    <source>
    </source>
</evidence>
<evidence type="ECO:0007829" key="23">
    <source>
        <dbReference type="PDB" id="5AXI"/>
    </source>
</evidence>
<accession>Q3TTA7</accession>
<accession>E9QMY2</accession>
<reference key="1">
    <citation type="journal article" date="2005" name="Science">
        <title>The transcriptional landscape of the mammalian genome.</title>
        <authorList>
            <person name="Carninci P."/>
            <person name="Kasukawa T."/>
            <person name="Katayama S."/>
            <person name="Gough J."/>
            <person name="Frith M.C."/>
            <person name="Maeda N."/>
            <person name="Oyama R."/>
            <person name="Ravasi T."/>
            <person name="Lenhard B."/>
            <person name="Wells C."/>
            <person name="Kodzius R."/>
            <person name="Shimokawa K."/>
            <person name="Bajic V.B."/>
            <person name="Brenner S.E."/>
            <person name="Batalov S."/>
            <person name="Forrest A.R."/>
            <person name="Zavolan M."/>
            <person name="Davis M.J."/>
            <person name="Wilming L.G."/>
            <person name="Aidinis V."/>
            <person name="Allen J.E."/>
            <person name="Ambesi-Impiombato A."/>
            <person name="Apweiler R."/>
            <person name="Aturaliya R.N."/>
            <person name="Bailey T.L."/>
            <person name="Bansal M."/>
            <person name="Baxter L."/>
            <person name="Beisel K.W."/>
            <person name="Bersano T."/>
            <person name="Bono H."/>
            <person name="Chalk A.M."/>
            <person name="Chiu K.P."/>
            <person name="Choudhary V."/>
            <person name="Christoffels A."/>
            <person name="Clutterbuck D.R."/>
            <person name="Crowe M.L."/>
            <person name="Dalla E."/>
            <person name="Dalrymple B.P."/>
            <person name="de Bono B."/>
            <person name="Della Gatta G."/>
            <person name="di Bernardo D."/>
            <person name="Down T."/>
            <person name="Engstrom P."/>
            <person name="Fagiolini M."/>
            <person name="Faulkner G."/>
            <person name="Fletcher C.F."/>
            <person name="Fukushima T."/>
            <person name="Furuno M."/>
            <person name="Futaki S."/>
            <person name="Gariboldi M."/>
            <person name="Georgii-Hemming P."/>
            <person name="Gingeras T.R."/>
            <person name="Gojobori T."/>
            <person name="Green R.E."/>
            <person name="Gustincich S."/>
            <person name="Harbers M."/>
            <person name="Hayashi Y."/>
            <person name="Hensch T.K."/>
            <person name="Hirokawa N."/>
            <person name="Hill D."/>
            <person name="Huminiecki L."/>
            <person name="Iacono M."/>
            <person name="Ikeo K."/>
            <person name="Iwama A."/>
            <person name="Ishikawa T."/>
            <person name="Jakt M."/>
            <person name="Kanapin A."/>
            <person name="Katoh M."/>
            <person name="Kawasawa Y."/>
            <person name="Kelso J."/>
            <person name="Kitamura H."/>
            <person name="Kitano H."/>
            <person name="Kollias G."/>
            <person name="Krishnan S.P."/>
            <person name="Kruger A."/>
            <person name="Kummerfeld S.K."/>
            <person name="Kurochkin I.V."/>
            <person name="Lareau L.F."/>
            <person name="Lazarevic D."/>
            <person name="Lipovich L."/>
            <person name="Liu J."/>
            <person name="Liuni S."/>
            <person name="McWilliam S."/>
            <person name="Madan Babu M."/>
            <person name="Madera M."/>
            <person name="Marchionni L."/>
            <person name="Matsuda H."/>
            <person name="Matsuzawa S."/>
            <person name="Miki H."/>
            <person name="Mignone F."/>
            <person name="Miyake S."/>
            <person name="Morris K."/>
            <person name="Mottagui-Tabar S."/>
            <person name="Mulder N."/>
            <person name="Nakano N."/>
            <person name="Nakauchi H."/>
            <person name="Ng P."/>
            <person name="Nilsson R."/>
            <person name="Nishiguchi S."/>
            <person name="Nishikawa S."/>
            <person name="Nori F."/>
            <person name="Ohara O."/>
            <person name="Okazaki Y."/>
            <person name="Orlando V."/>
            <person name="Pang K.C."/>
            <person name="Pavan W.J."/>
            <person name="Pavesi G."/>
            <person name="Pesole G."/>
            <person name="Petrovsky N."/>
            <person name="Piazza S."/>
            <person name="Reed J."/>
            <person name="Reid J.F."/>
            <person name="Ring B.Z."/>
            <person name="Ringwald M."/>
            <person name="Rost B."/>
            <person name="Ruan Y."/>
            <person name="Salzberg S.L."/>
            <person name="Sandelin A."/>
            <person name="Schneider C."/>
            <person name="Schoenbach C."/>
            <person name="Sekiguchi K."/>
            <person name="Semple C.A."/>
            <person name="Seno S."/>
            <person name="Sessa L."/>
            <person name="Sheng Y."/>
            <person name="Shibata Y."/>
            <person name="Shimada H."/>
            <person name="Shimada K."/>
            <person name="Silva D."/>
            <person name="Sinclair B."/>
            <person name="Sperling S."/>
            <person name="Stupka E."/>
            <person name="Sugiura K."/>
            <person name="Sultana R."/>
            <person name="Takenaka Y."/>
            <person name="Taki K."/>
            <person name="Tammoja K."/>
            <person name="Tan S.L."/>
            <person name="Tang S."/>
            <person name="Taylor M.S."/>
            <person name="Tegner J."/>
            <person name="Teichmann S.A."/>
            <person name="Ueda H.R."/>
            <person name="van Nimwegen E."/>
            <person name="Verardo R."/>
            <person name="Wei C.L."/>
            <person name="Yagi K."/>
            <person name="Yamanishi H."/>
            <person name="Zabarovsky E."/>
            <person name="Zhu S."/>
            <person name="Zimmer A."/>
            <person name="Hide W."/>
            <person name="Bult C."/>
            <person name="Grimmond S.M."/>
            <person name="Teasdale R.D."/>
            <person name="Liu E.T."/>
            <person name="Brusic V."/>
            <person name="Quackenbush J."/>
            <person name="Wahlestedt C."/>
            <person name="Mattick J.S."/>
            <person name="Hume D.A."/>
            <person name="Kai C."/>
            <person name="Sasaki D."/>
            <person name="Tomaru Y."/>
            <person name="Fukuda S."/>
            <person name="Kanamori-Katayama M."/>
            <person name="Suzuki M."/>
            <person name="Aoki J."/>
            <person name="Arakawa T."/>
            <person name="Iida J."/>
            <person name="Imamura K."/>
            <person name="Itoh M."/>
            <person name="Kato T."/>
            <person name="Kawaji H."/>
            <person name="Kawagashira N."/>
            <person name="Kawashima T."/>
            <person name="Kojima M."/>
            <person name="Kondo S."/>
            <person name="Konno H."/>
            <person name="Nakano K."/>
            <person name="Ninomiya N."/>
            <person name="Nishio T."/>
            <person name="Okada M."/>
            <person name="Plessy C."/>
            <person name="Shibata K."/>
            <person name="Shiraki T."/>
            <person name="Suzuki S."/>
            <person name="Tagami M."/>
            <person name="Waki K."/>
            <person name="Watahiki A."/>
            <person name="Okamura-Oho Y."/>
            <person name="Suzuki H."/>
            <person name="Kawai J."/>
            <person name="Hayashizaki Y."/>
        </authorList>
    </citation>
    <scope>NUCLEOTIDE SEQUENCE [LARGE SCALE MRNA] (ISOFORMS 1 AND 2)</scope>
    <source>
        <strain>C57BL/6J</strain>
        <tissue>Testis</tissue>
    </source>
</reference>
<reference key="2">
    <citation type="journal article" date="2009" name="PLoS Biol.">
        <title>Lineage-specific biology revealed by a finished genome assembly of the mouse.</title>
        <authorList>
            <person name="Church D.M."/>
            <person name="Goodstadt L."/>
            <person name="Hillier L.W."/>
            <person name="Zody M.C."/>
            <person name="Goldstein S."/>
            <person name="She X."/>
            <person name="Bult C.J."/>
            <person name="Agarwala R."/>
            <person name="Cherry J.L."/>
            <person name="DiCuccio M."/>
            <person name="Hlavina W."/>
            <person name="Kapustin Y."/>
            <person name="Meric P."/>
            <person name="Maglott D."/>
            <person name="Birtle Z."/>
            <person name="Marques A.C."/>
            <person name="Graves T."/>
            <person name="Zhou S."/>
            <person name="Teague B."/>
            <person name="Potamousis K."/>
            <person name="Churas C."/>
            <person name="Place M."/>
            <person name="Herschleb J."/>
            <person name="Runnheim R."/>
            <person name="Forrest D."/>
            <person name="Amos-Landgraf J."/>
            <person name="Schwartz D.C."/>
            <person name="Cheng Z."/>
            <person name="Lindblad-Toh K."/>
            <person name="Eichler E.E."/>
            <person name="Ponting C.P."/>
        </authorList>
    </citation>
    <scope>NUCLEOTIDE SEQUENCE [LARGE SCALE GENOMIC DNA]</scope>
    <source>
        <strain>C57BL/6J</strain>
    </source>
</reference>
<reference key="3">
    <citation type="journal article" date="2000" name="Immunity">
        <title>Cbl-b is a negative regulator of receptor clustering and raft aggregation in T cells.</title>
        <authorList>
            <person name="Krawczyk C."/>
            <person name="Bachmaier K."/>
            <person name="Sasaki T."/>
            <person name="Jones R.G."/>
            <person name="Snapper S.B."/>
            <person name="Bouchard D."/>
            <person name="Kozieradzki I."/>
            <person name="Ohashi P.S."/>
            <person name="Alt F.W."/>
            <person name="Penninger J.M."/>
        </authorList>
    </citation>
    <scope>FUNCTION</scope>
</reference>
<reference key="4">
    <citation type="journal article" date="2000" name="Nature">
        <title>Negative regulation of lymphocyte activation and autoimmunity by the molecular adaptor Cbl-b.</title>
        <authorList>
            <person name="Bachmaier K."/>
            <person name="Krawczyk C."/>
            <person name="Kozieradzki I."/>
            <person name="Kong Y.-Y."/>
            <person name="Sasaki T."/>
            <person name="Oliveira-dos-Santos A."/>
            <person name="Mariathasan S."/>
            <person name="Bouchard D."/>
            <person name="Wakeham A."/>
            <person name="Itie A."/>
            <person name="Le J."/>
            <person name="Ohashi P.S."/>
            <person name="Sarosi I."/>
            <person name="Nishina H."/>
            <person name="Lipkowitz S."/>
            <person name="Penninger J.M."/>
        </authorList>
    </citation>
    <scope>FUNCTION</scope>
    <scope>INTERACTION WITH PIK3R1; LCP2; ZAP70; LCK; PLCG1 AND VAV1</scope>
</reference>
<reference key="5">
    <citation type="journal article" date="2000" name="Nature">
        <title>Cbl-b regulates the CD28 dependence of T-cell activation.</title>
        <authorList>
            <person name="Chiang Y.J."/>
            <person name="Kole H.K."/>
            <person name="Brown K."/>
            <person name="Naramura M."/>
            <person name="Fukuhara S."/>
            <person name="Hu R.-J."/>
            <person name="Jang I.K."/>
            <person name="Gutkind J.S."/>
            <person name="Shevach E."/>
            <person name="Gu H."/>
        </authorList>
    </citation>
    <scope>FUNCTION</scope>
    <scope>DISRUPTION PHENOTYPE</scope>
</reference>
<reference key="6">
    <citation type="journal article" date="2001" name="Nat. Immunol.">
        <title>Proteolysis-independent regulation of PI3K by Cbl-b-mediated ubiquitination in T cells.</title>
        <authorList>
            <person name="Fang D."/>
            <person name="Liu Y.-C."/>
        </authorList>
    </citation>
    <scope>FUNCTION</scope>
</reference>
<reference key="7">
    <citation type="journal article" date="2002" name="J. Immunol.">
        <title>Regulation of T cell activation threshold by CD28 costimulation through targeting Cbl-b for ubiquitination.</title>
        <authorList>
            <person name="Zhang J."/>
            <person name="Bardos T."/>
            <person name="Li D."/>
            <person name="Gal I."/>
            <person name="Vermes C."/>
            <person name="Xu J."/>
            <person name="Mikecz K."/>
            <person name="Finnegan A."/>
            <person name="Lipkowitz S."/>
            <person name="Glant T.T."/>
        </authorList>
    </citation>
    <scope>UBIQUITINATION</scope>
</reference>
<reference key="8">
    <citation type="journal article" date="2003" name="J. Biol. Chem.">
        <title>The roles of Cbl-b and c-Cbl in insulin-stimulated glucose transport.</title>
        <authorList>
            <person name="Liu J."/>
            <person name="DeYoung S.M."/>
            <person name="Hwang J.B."/>
            <person name="O'Leary E.E."/>
            <person name="Saltiel A.R."/>
        </authorList>
    </citation>
    <scope>PHOSPHORYLATION AT TYR-664 AND TYR-708</scope>
    <scope>INTERACTION WITH CBL; CRK AND SORBS1</scope>
    <scope>SUBCELLULAR LOCATION</scope>
</reference>
<reference key="9">
    <citation type="journal article" date="2003" name="J. Exp. Med.">
        <title>Cbl-b negatively regulates B cell antigen receptor signaling in mature B cells through ubiquitination of the tyrosine kinase Syk.</title>
        <authorList>
            <person name="Sohn H.W."/>
            <person name="Gu H."/>
            <person name="Pierce S.K."/>
        </authorList>
    </citation>
    <scope>PHOSPHORYLATION</scope>
    <scope>FUNCTION</scope>
</reference>
<reference key="10">
    <citation type="journal article" date="2004" name="Immunity">
        <title>Essential role of the E3 ubiquitin ligase Cbl-b in T cell anergy induction.</title>
        <authorList>
            <person name="Jeon M.-S."/>
            <person name="Atfield A."/>
            <person name="Venuprasad K."/>
            <person name="Krawczyk C."/>
            <person name="Sarao R."/>
            <person name="Elly C."/>
            <person name="Yang C."/>
            <person name="Arya S."/>
            <person name="Bachmaier K."/>
            <person name="Su L."/>
            <person name="Bouchard D."/>
            <person name="Jones R."/>
            <person name="Gronski M."/>
            <person name="Ohashi P."/>
            <person name="Wada T."/>
            <person name="Bloom D."/>
            <person name="Fathman C.G."/>
            <person name="Liu Y.-C."/>
            <person name="Penninger J.M."/>
        </authorList>
    </citation>
    <scope>FUNCTION</scope>
</reference>
<reference key="11">
    <citation type="journal article" date="2005" name="Nat. Biotechnol.">
        <title>Immunoaffinity profiling of tyrosine phosphorylation in cancer cells.</title>
        <authorList>
            <person name="Rush J."/>
            <person name="Moritz A."/>
            <person name="Lee K.A."/>
            <person name="Guo A."/>
            <person name="Goss V.L."/>
            <person name="Spek E.J."/>
            <person name="Zhang H."/>
            <person name="Zha X.-M."/>
            <person name="Polakiewicz R.D."/>
            <person name="Comb M.J."/>
        </authorList>
    </citation>
    <scope>PHOSPHORYLATION [LARGE SCALE ANALYSIS] AT TYR-889</scope>
    <scope>IDENTIFICATION BY MASS SPECTROMETRY [LARGE SCALE ANALYSIS]</scope>
</reference>
<reference key="12">
    <citation type="journal article" date="2010" name="Cell">
        <title>A tissue-specific atlas of mouse protein phosphorylation and expression.</title>
        <authorList>
            <person name="Huttlin E.L."/>
            <person name="Jedrychowski M.P."/>
            <person name="Elias J.E."/>
            <person name="Goswami T."/>
            <person name="Rad R."/>
            <person name="Beausoleil S.A."/>
            <person name="Villen J."/>
            <person name="Haas W."/>
            <person name="Sowa M.E."/>
            <person name="Gygi S.P."/>
        </authorList>
    </citation>
    <scope>PHOSPHORYLATION [LARGE SCALE ANALYSIS] AT SER-480; SER-484 AND SER-521</scope>
    <scope>IDENTIFICATION BY MASS SPECTROMETRY [LARGE SCALE ANALYSIS]</scope>
    <source>
        <tissue>Spleen</tissue>
        <tissue>Testis</tissue>
    </source>
</reference>
<reference key="13">
    <citation type="journal article" date="2018" name="J. Cell Biol.">
        <title>IFT20 modulates ciliary PDGFRalpha signaling by regulating the stability of Cbl E3 ubiquitin ligases.</title>
        <authorList>
            <person name="Schmid F.M."/>
            <person name="Schou K.B."/>
            <person name="Vilhelm M.J."/>
            <person name="Holm M.S."/>
            <person name="Breslin L."/>
            <person name="Farinelli P."/>
            <person name="Larsen L.A."/>
            <person name="Andersen J.S."/>
            <person name="Pedersen L.B."/>
            <person name="Christensen S.T."/>
        </authorList>
    </citation>
    <scope>FUNCTION</scope>
    <scope>INDUCTION</scope>
</reference>
<reference key="14">
    <citation type="journal article" date="2022" name="J. Clin. Invest.">
        <title>Immune dysregulation caused by homozygous mutations in CBLB.</title>
        <authorList>
            <person name="Janssen E."/>
            <person name="Peters Z."/>
            <person name="Alosaimi M.F."/>
            <person name="Smith E."/>
            <person name="Milin E."/>
            <person name="Stafstrom K."/>
            <person name="Wallace J.G."/>
            <person name="Platt C.D."/>
            <person name="Chou J."/>
            <person name="El Ansari Y.S."/>
            <person name="Al Farsi T."/>
            <person name="Ameziane N."/>
            <person name="Al-Ali R."/>
            <person name="Calvo M."/>
            <person name="Rocha M.E."/>
            <person name="Bauer P."/>
            <person name="Al-Sannaa N.A."/>
            <person name="Al Sukaiti N.F."/>
            <person name="Alangari A.A."/>
            <person name="Bertoli-Avella A.M."/>
            <person name="Geha R.S."/>
        </authorList>
    </citation>
    <scope>MUTAGENESIS OF HIS-257</scope>
</reference>
<comment type="function">
    <text evidence="9 10 11 12 14 16 17">E3 ubiquitin-protein ligase which accepts ubiquitin from specific E2 ubiquitin-conjugating enzymes, and transfers it to substrates, generally promoting their degradation by the proteasome. Negatively regulates TCR (T-cell receptor), BCR (B-cell receptor) and FCER1 (high affinity immunoglobulin epsilon receptor) signal transduction pathways. In naive T-cells, inhibits VAV1 activation upon TCR engagement and imposes a requirement for CD28 costimulation for proliferation and IL-2 production. Also acts by promoting PIK3R1/p85 ubiquitination, which impairs its recruitment to the TCR and subsequent activation. In activated T-cells, inhibits PLCG1 activation and calcium mobilization upon restimulation and promotes anergy. In B-cells, acts by ubiquitinating SYK and promoting its proteasomal degradation. Slightly promotes SRC ubiquitination. May be involved in EGFR ubiquitination and internalization. May be functionally coupled with the E2 ubiquitin-protein ligase UB2D3. In association with CBL, required for proper feedback inhibition of ciliary platelet-derived growth factor receptor-alpha (PDGFRA) signaling pathway via ubiquitination and internalization of PDGFRA (PubMed:29237719).</text>
</comment>
<comment type="catalytic activity">
    <reaction evidence="3">
        <text>S-ubiquitinyl-[E2 ubiquitin-conjugating enzyme]-L-cysteine + [acceptor protein]-L-lysine = [E2 ubiquitin-conjugating enzyme]-L-cysteine + N(6)-ubiquitinyl-[acceptor protein]-L-lysine.</text>
        <dbReference type="EC" id="2.3.2.27"/>
    </reaction>
</comment>
<comment type="pathway">
    <text>Protein modification; protein ubiquitination.</text>
</comment>
<comment type="subunit">
    <text evidence="3 9 15">Interacts with SH3 domain-containing proteins LCK, CRK and SORBS1. Interacts with LCP2 and ZAP70. Interacts with CBL. Interacts with SH3 domain-containing proteins VAV1, FYN, FGR, PLCG1, GRB2, CRKL, PIK3R1 and SH3KBP1/CIN85. Identified in heterotrimeric complexes with SH3KBP1/CIN85, CD2AP and ARHGEF7, where one CBLB peptide binds two copies of the other protein. Interacts with poly-ubiquitinated proteins. Dimerization is required for the binding of poly-ubiquitin, but not for the binding of mono-ubiquitin. Interacts with EGFR (phosphorylated). Interacts with IFT20 (By similarity).</text>
</comment>
<comment type="interaction">
    <interactant intactId="EBI-3649276">
        <id>Q3TTA7</id>
    </interactant>
    <interactant intactId="EBI-12600513">
        <id>P13379</id>
        <label>Cd5</label>
    </interactant>
    <organismsDiffer>false</organismsDiffer>
    <experiments>4</experiments>
</comment>
<comment type="interaction">
    <interactant intactId="EBI-3649276">
        <id>Q3TTA7</id>
    </interactant>
    <interactant intactId="EBI-525108">
        <id>P22366</id>
        <label>Myd88</label>
    </interactant>
    <organismsDiffer>false</organismsDiffer>
    <experiments>2</experiments>
</comment>
<comment type="interaction">
    <interactant intactId="EBI-3649276">
        <id>Q3TTA7</id>
    </interactant>
    <interactant intactId="EBI-3649271">
        <id>Q80UF7</id>
        <label>Ticam1</label>
    </interactant>
    <organismsDiffer>false</organismsDiffer>
    <experiments>2</experiments>
</comment>
<comment type="subcellular location">
    <subcellularLocation>
        <location evidence="15">Cytoplasm</location>
    </subcellularLocation>
    <text>In adipocytes, translocates to the plasma membrane upon insulin stimulation.</text>
</comment>
<comment type="alternative products">
    <event type="alternative splicing"/>
    <isoform>
        <id>Q3TTA7-1</id>
        <name>1</name>
        <sequence type="displayed"/>
    </isoform>
    <isoform>
        <id>Q3TTA7-2</id>
        <name>2</name>
        <sequence type="described" ref="VSP_017222"/>
    </isoform>
</comment>
<comment type="induction">
    <text evidence="17">By serum starvation.</text>
</comment>
<comment type="domain">
    <text>The N-terminus is composed of the phosphotyrosine binding (PTB) domain, a short linker region and the RING-type zinc finger. The PTB domain, which is also called TKB (tyrosine kinase binding) domain, is composed of three different subdomains: a four-helix bundle (4H), a calcium-binding EF hand and a divergent SH2 domain.</text>
</comment>
<comment type="domain">
    <text>The RING-type zinc finger domain mediates binding to an E2 ubiquitin-conjugating enzyme.</text>
</comment>
<comment type="domain">
    <text evidence="3">The UBA domain interacts with poly-ubiquitinated proteins.</text>
</comment>
<comment type="PTM">
    <text evidence="14 15">Phosphorylated on tyrosine and serine residues upon TCR or BCR activation. Phosphorylated on Tyr-664 and Tyr-708 in adipocytes following insulin stimulation.</text>
</comment>
<comment type="PTM">
    <text evidence="13">Auto-ubiquitinated upon EGF-mediated cell activation or upon T-cell costimulation by CD28; which promotes proteasomal degradation.</text>
</comment>
<comment type="disruption phenotype">
    <text evidence="10">Mice are fertile and grossly normal. However, they show a high sensitivity to autoimmune diseases and may develop a spontaneous generalized autoimmune disorder characterized by auto-antibody production, infiltration of activated T- and B-lymphocytes into various organs and parenchymal damage.</text>
</comment>
<comment type="miscellaneous">
    <text evidence="1">This protein has one functional calcium-binding site.</text>
</comment>
<protein>
    <recommendedName>
        <fullName>E3 ubiquitin-protein ligase CBL-B</fullName>
        <ecNumber evidence="3">2.3.2.27</ecNumber>
    </recommendedName>
    <alternativeName>
        <fullName>Casitas B-lineage lymphoma proto-oncogene b</fullName>
    </alternativeName>
    <alternativeName>
        <fullName evidence="20">RING-type E3 ubiquitin transferase CBL-B</fullName>
    </alternativeName>
    <alternativeName>
        <fullName>SH3-binding protein CBL-B</fullName>
    </alternativeName>
    <alternativeName>
        <fullName>Signal transduction protein CBL-B</fullName>
    </alternativeName>
</protein>
<keyword id="KW-0002">3D-structure</keyword>
<keyword id="KW-0025">Alternative splicing</keyword>
<keyword id="KW-0106">Calcium</keyword>
<keyword id="KW-0963">Cytoplasm</keyword>
<keyword id="KW-0479">Metal-binding</keyword>
<keyword id="KW-0597">Phosphoprotein</keyword>
<keyword id="KW-1185">Reference proteome</keyword>
<keyword id="KW-0677">Repeat</keyword>
<keyword id="KW-0808">Transferase</keyword>
<keyword id="KW-0832">Ubl conjugation</keyword>
<keyword id="KW-0833">Ubl conjugation pathway</keyword>
<keyword id="KW-0862">Zinc</keyword>
<keyword id="KW-0863">Zinc-finger</keyword>
<sequence length="982" mass="109092">MANSMNGRNPGGRGGNPRKGRILGIIDAIQDAVGPPKQAAADRRTVEKTWKLMDKVVRLCQNPKLQLKNSPPYILDILPDTYQHLRLILSKYDDNQKLAQLSENEYFKIYIDSLMKKSKRAIRLFKEGKERMYEEQSQDRRNLTKLSLIFSHMLAEIKAIFPNGQFQGDNFRITKADAAEFWRKFFGDKTIVPWKVFRQCLHEVHQISSGLEAMALKSTIDLTCNDYISVFEFDIFTRLFQPWGSILRNWNFLAVTHPGYMAFLTYDEVKARLQKYSTKPGSYIFRLSCTRLGQWAIGYVTGDGNILQTIPHNKPLFQALIDGSREGFYLYPDGRSYNPDLTGLCEPTPHDHIKVTQEQYELYCEMGSTFQLCKICAENDKDVKIEPCGHLMCTSCLTAWQESDGQGCPFCRCEIKGTEPIIVDPFDPRDEGSRCCSIIDPFSIPMLDLDDDDDREESLMMNRLASVRKCTDRQNSPVTSPGSSPLAQRRKPQPDPLQIPHLSLPPVPPRLDLIQKGIVRSPCGSPTGSPKSSPCMVRKQDKPLPAPPPPLRDPPPPPERPPPIPPDNRLSRHFHHGESVPSRDQPMPLEAWCPRDAFGTNQVMGCRILGDGSPKPGVTANSSLNGRHSRMGSEQVLMRKHRRHDLPSEGAKVFSNGHLATEEYDVPPRLSPPPPVTTLLPSIKCTGPLANCLSEKTRDTVEDDDDEYKIPSSHPVSLNSQPSHCHNVKAPVRSCDNGHCILNGTHGAPSEMKKSNIPDLGIYLKGGGSDSASDPVPLPPARPPPRDSPKHGSSVNRTPSDYDLLIPPLGEDAFDALPPSLPPPPPPARHSLIEHSKPPGSSSRPSSGQDLFLLPSDPFFDPTSGQVPLPPARRAAGDSGKANRASQDYDQLPSSSDGSQAPARPPKPRPRRTAPEIHHRKPHGPEAALENVDAKIAKLMGEGYAFEEVKRALEIAQNNVEVARSILREFAFPPPVSPRLNL</sequence>